<feature type="chain" id="PRO_0000158411" description="Ribose-5-phosphate isomerase A">
    <location>
        <begin position="1"/>
        <end position="226"/>
    </location>
</feature>
<feature type="active site" description="Proton acceptor" evidence="1">
    <location>
        <position position="106"/>
    </location>
</feature>
<feature type="binding site" evidence="1">
    <location>
        <begin position="28"/>
        <end position="31"/>
    </location>
    <ligand>
        <name>substrate</name>
    </ligand>
</feature>
<feature type="binding site" evidence="1">
    <location>
        <begin position="84"/>
        <end position="87"/>
    </location>
    <ligand>
        <name>substrate</name>
    </ligand>
</feature>
<feature type="binding site" evidence="1">
    <location>
        <begin position="97"/>
        <end position="100"/>
    </location>
    <ligand>
        <name>substrate</name>
    </ligand>
</feature>
<feature type="binding site" evidence="1">
    <location>
        <position position="124"/>
    </location>
    <ligand>
        <name>substrate</name>
    </ligand>
</feature>
<keyword id="KW-0413">Isomerase</keyword>
<keyword id="KW-1185">Reference proteome</keyword>
<reference key="1">
    <citation type="journal article" date="1999" name="Science">
        <title>Genome sequence of the radioresistant bacterium Deinococcus radiodurans R1.</title>
        <authorList>
            <person name="White O."/>
            <person name="Eisen J.A."/>
            <person name="Heidelberg J.F."/>
            <person name="Hickey E.K."/>
            <person name="Peterson J.D."/>
            <person name="Dodson R.J."/>
            <person name="Haft D.H."/>
            <person name="Gwinn M.L."/>
            <person name="Nelson W.C."/>
            <person name="Richardson D.L."/>
            <person name="Moffat K.S."/>
            <person name="Qin H."/>
            <person name="Jiang L."/>
            <person name="Pamphile W."/>
            <person name="Crosby M."/>
            <person name="Shen M."/>
            <person name="Vamathevan J.J."/>
            <person name="Lam P."/>
            <person name="McDonald L.A."/>
            <person name="Utterback T.R."/>
            <person name="Zalewski C."/>
            <person name="Makarova K.S."/>
            <person name="Aravind L."/>
            <person name="Daly M.J."/>
            <person name="Minton K.W."/>
            <person name="Fleischmann R.D."/>
            <person name="Ketchum K.A."/>
            <person name="Nelson K.E."/>
            <person name="Salzberg S.L."/>
            <person name="Smith H.O."/>
            <person name="Venter J.C."/>
            <person name="Fraser C.M."/>
        </authorList>
    </citation>
    <scope>NUCLEOTIDE SEQUENCE [LARGE SCALE GENOMIC DNA]</scope>
    <source>
        <strain>ATCC 13939 / DSM 20539 / JCM 16871 / CCUG 27074 / LMG 4051 / NBRC 15346 / NCIMB 9279 / VKM B-1422 / R1</strain>
    </source>
</reference>
<organism>
    <name type="scientific">Deinococcus radiodurans (strain ATCC 13939 / DSM 20539 / JCM 16871 / CCUG 27074 / LMG 4051 / NBRC 15346 / NCIMB 9279 / VKM B-1422 / R1)</name>
    <dbReference type="NCBI Taxonomy" id="243230"/>
    <lineage>
        <taxon>Bacteria</taxon>
        <taxon>Thermotogati</taxon>
        <taxon>Deinococcota</taxon>
        <taxon>Deinococci</taxon>
        <taxon>Deinococcales</taxon>
        <taxon>Deinococcaceae</taxon>
        <taxon>Deinococcus</taxon>
    </lineage>
</organism>
<proteinExistence type="inferred from homology"/>
<gene>
    <name evidence="1" type="primary">rpiA</name>
    <name type="ordered locus">DR_0845</name>
</gene>
<sequence length="226" mass="24236">MDLEALKKEAALRSVALVQSGQRVGLGTGSTAKYAIEELGRKLAAGELSGIVGVSTSEASEKLAREVGIPTEPLDPRPLDIAIDGADEIAPNLDLVKGLGGALVREKMTEVQAKRLIIIADHTKLVTRLGEKAPLPIEIVPFGFLSTIERLREFLPGGRLRQPGAQPYVTDNGNYIFDAQLPAEFDARELERRIKGTLGVVDTGLFLGMAERAFVAAPDGVQELTR</sequence>
<evidence type="ECO:0000255" key="1">
    <source>
        <dbReference type="HAMAP-Rule" id="MF_00170"/>
    </source>
</evidence>
<name>RPIA_DEIRA</name>
<dbReference type="EC" id="5.3.1.6" evidence="1"/>
<dbReference type="EMBL" id="AE000513">
    <property type="protein sequence ID" value="AAF10424.1"/>
    <property type="molecule type" value="Genomic_DNA"/>
</dbReference>
<dbReference type="PIR" id="C75467">
    <property type="entry name" value="C75467"/>
</dbReference>
<dbReference type="RefSeq" id="NP_294569.1">
    <property type="nucleotide sequence ID" value="NC_001263.1"/>
</dbReference>
<dbReference type="RefSeq" id="WP_010887491.1">
    <property type="nucleotide sequence ID" value="NC_001263.1"/>
</dbReference>
<dbReference type="SMR" id="Q9RW24"/>
<dbReference type="STRING" id="243230.DR_0845"/>
<dbReference type="PaxDb" id="243230-DR_0845"/>
<dbReference type="EnsemblBacteria" id="AAF10424">
    <property type="protein sequence ID" value="AAF10424"/>
    <property type="gene ID" value="DR_0845"/>
</dbReference>
<dbReference type="GeneID" id="69517090"/>
<dbReference type="KEGG" id="dra:DR_0845"/>
<dbReference type="PATRIC" id="fig|243230.17.peg.1028"/>
<dbReference type="eggNOG" id="COG0120">
    <property type="taxonomic scope" value="Bacteria"/>
</dbReference>
<dbReference type="HOGENOM" id="CLU_056590_1_0_0"/>
<dbReference type="InParanoid" id="Q9RW24"/>
<dbReference type="OrthoDB" id="5870696at2"/>
<dbReference type="UniPathway" id="UPA00115">
    <property type="reaction ID" value="UER00412"/>
</dbReference>
<dbReference type="Proteomes" id="UP000002524">
    <property type="component" value="Chromosome 1"/>
</dbReference>
<dbReference type="GO" id="GO:0004751">
    <property type="term" value="F:ribose-5-phosphate isomerase activity"/>
    <property type="evidence" value="ECO:0007669"/>
    <property type="project" value="UniProtKB-UniRule"/>
</dbReference>
<dbReference type="GO" id="GO:0009052">
    <property type="term" value="P:pentose-phosphate shunt, non-oxidative branch"/>
    <property type="evidence" value="ECO:0007669"/>
    <property type="project" value="UniProtKB-UniRule"/>
</dbReference>
<dbReference type="CDD" id="cd01398">
    <property type="entry name" value="RPI_A"/>
    <property type="match status" value="1"/>
</dbReference>
<dbReference type="FunFam" id="3.40.50.1360:FF:000001">
    <property type="entry name" value="Ribose-5-phosphate isomerase A"/>
    <property type="match status" value="1"/>
</dbReference>
<dbReference type="Gene3D" id="3.30.70.260">
    <property type="match status" value="1"/>
</dbReference>
<dbReference type="Gene3D" id="3.40.50.1360">
    <property type="match status" value="1"/>
</dbReference>
<dbReference type="HAMAP" id="MF_00170">
    <property type="entry name" value="Rib_5P_isom_A"/>
    <property type="match status" value="1"/>
</dbReference>
<dbReference type="InterPro" id="IPR037171">
    <property type="entry name" value="NagB/RpiA_transferase-like"/>
</dbReference>
<dbReference type="InterPro" id="IPR050262">
    <property type="entry name" value="Ribose-5P_isomerase"/>
</dbReference>
<dbReference type="InterPro" id="IPR020672">
    <property type="entry name" value="Ribose5P_isomerase_typA_subgr"/>
</dbReference>
<dbReference type="InterPro" id="IPR004788">
    <property type="entry name" value="Ribose5P_isomerase_type_A"/>
</dbReference>
<dbReference type="NCBIfam" id="NF001924">
    <property type="entry name" value="PRK00702.1"/>
    <property type="match status" value="1"/>
</dbReference>
<dbReference type="NCBIfam" id="TIGR00021">
    <property type="entry name" value="rpiA"/>
    <property type="match status" value="1"/>
</dbReference>
<dbReference type="PANTHER" id="PTHR43748">
    <property type="entry name" value="RIBOSE-5-PHOSPHATE ISOMERASE 3, CHLOROPLASTIC-RELATED"/>
    <property type="match status" value="1"/>
</dbReference>
<dbReference type="PANTHER" id="PTHR43748:SF3">
    <property type="entry name" value="RIBOSE-5-PHOSPHATE ISOMERASE 3, CHLOROPLASTIC-RELATED"/>
    <property type="match status" value="1"/>
</dbReference>
<dbReference type="Pfam" id="PF06026">
    <property type="entry name" value="Rib_5-P_isom_A"/>
    <property type="match status" value="1"/>
</dbReference>
<dbReference type="SUPFAM" id="SSF75445">
    <property type="entry name" value="D-ribose-5-phosphate isomerase (RpiA), lid domain"/>
    <property type="match status" value="1"/>
</dbReference>
<dbReference type="SUPFAM" id="SSF100950">
    <property type="entry name" value="NagB/RpiA/CoA transferase-like"/>
    <property type="match status" value="1"/>
</dbReference>
<accession>Q9RW24</accession>
<protein>
    <recommendedName>
        <fullName evidence="1">Ribose-5-phosphate isomerase A</fullName>
        <ecNumber evidence="1">5.3.1.6</ecNumber>
    </recommendedName>
    <alternativeName>
        <fullName evidence="1">Phosphoriboisomerase A</fullName>
        <shortName evidence="1">PRI</shortName>
    </alternativeName>
</protein>
<comment type="function">
    <text evidence="1">Catalyzes the reversible conversion of ribose-5-phosphate to ribulose 5-phosphate.</text>
</comment>
<comment type="catalytic activity">
    <reaction evidence="1">
        <text>aldehydo-D-ribose 5-phosphate = D-ribulose 5-phosphate</text>
        <dbReference type="Rhea" id="RHEA:14657"/>
        <dbReference type="ChEBI" id="CHEBI:58121"/>
        <dbReference type="ChEBI" id="CHEBI:58273"/>
        <dbReference type="EC" id="5.3.1.6"/>
    </reaction>
</comment>
<comment type="pathway">
    <text evidence="1">Carbohydrate degradation; pentose phosphate pathway; D-ribose 5-phosphate from D-ribulose 5-phosphate (non-oxidative stage): step 1/1.</text>
</comment>
<comment type="subunit">
    <text evidence="1">Homodimer.</text>
</comment>
<comment type="similarity">
    <text evidence="1">Belongs to the ribose 5-phosphate isomerase family.</text>
</comment>